<reference key="1">
    <citation type="journal article" date="2009" name="BMC Genomics">
        <title>Pseudogene accumulation in the evolutionary histories of Salmonella enterica serovars Paratyphi A and Typhi.</title>
        <authorList>
            <person name="Holt K.E."/>
            <person name="Thomson N.R."/>
            <person name="Wain J."/>
            <person name="Langridge G.C."/>
            <person name="Hasan R."/>
            <person name="Bhutta Z.A."/>
            <person name="Quail M.A."/>
            <person name="Norbertczak H."/>
            <person name="Walker D."/>
            <person name="Simmonds M."/>
            <person name="White B."/>
            <person name="Bason N."/>
            <person name="Mungall K."/>
            <person name="Dougan G."/>
            <person name="Parkhill J."/>
        </authorList>
    </citation>
    <scope>NUCLEOTIDE SEQUENCE [LARGE SCALE GENOMIC DNA]</scope>
    <source>
        <strain>AKU_12601</strain>
    </source>
</reference>
<comment type="function">
    <text evidence="1">Catalyzes the NAD-dependent conversion of D-erythrose 4-phosphate to 4-phosphoerythronate.</text>
</comment>
<comment type="catalytic activity">
    <reaction evidence="1">
        <text>D-erythrose 4-phosphate + NAD(+) + H2O = 4-phospho-D-erythronate + NADH + 2 H(+)</text>
        <dbReference type="Rhea" id="RHEA:12056"/>
        <dbReference type="ChEBI" id="CHEBI:15377"/>
        <dbReference type="ChEBI" id="CHEBI:15378"/>
        <dbReference type="ChEBI" id="CHEBI:16897"/>
        <dbReference type="ChEBI" id="CHEBI:57540"/>
        <dbReference type="ChEBI" id="CHEBI:57945"/>
        <dbReference type="ChEBI" id="CHEBI:58766"/>
        <dbReference type="EC" id="1.2.1.72"/>
    </reaction>
</comment>
<comment type="pathway">
    <text evidence="1">Cofactor biosynthesis; pyridoxine 5'-phosphate biosynthesis; pyridoxine 5'-phosphate from D-erythrose 4-phosphate: step 1/5.</text>
</comment>
<comment type="subunit">
    <text evidence="1">Homotetramer.</text>
</comment>
<comment type="subcellular location">
    <subcellularLocation>
        <location evidence="1">Cytoplasm</location>
    </subcellularLocation>
</comment>
<comment type="similarity">
    <text evidence="1">Belongs to the glyceraldehyde-3-phosphate dehydrogenase family. Epd subfamily.</text>
</comment>
<proteinExistence type="inferred from homology"/>
<feature type="chain" id="PRO_1000186839" description="D-erythrose-4-phosphate dehydrogenase">
    <location>
        <begin position="1"/>
        <end position="348"/>
    </location>
</feature>
<feature type="active site" description="Nucleophile" evidence="1">
    <location>
        <position position="155"/>
    </location>
</feature>
<feature type="binding site" evidence="1">
    <location>
        <begin position="12"/>
        <end position="13"/>
    </location>
    <ligand>
        <name>NAD(+)</name>
        <dbReference type="ChEBI" id="CHEBI:57540"/>
    </ligand>
</feature>
<feature type="binding site" evidence="1">
    <location>
        <position position="81"/>
    </location>
    <ligand>
        <name>NAD(+)</name>
        <dbReference type="ChEBI" id="CHEBI:57540"/>
    </ligand>
</feature>
<feature type="binding site" evidence="1">
    <location>
        <begin position="154"/>
        <end position="156"/>
    </location>
    <ligand>
        <name>substrate</name>
    </ligand>
</feature>
<feature type="binding site" evidence="1">
    <location>
        <position position="200"/>
    </location>
    <ligand>
        <name>substrate</name>
    </ligand>
</feature>
<feature type="binding site" evidence="1">
    <location>
        <begin position="213"/>
        <end position="214"/>
    </location>
    <ligand>
        <name>substrate</name>
    </ligand>
</feature>
<feature type="binding site" evidence="1">
    <location>
        <position position="236"/>
    </location>
    <ligand>
        <name>substrate</name>
    </ligand>
</feature>
<feature type="binding site" evidence="1">
    <location>
        <position position="318"/>
    </location>
    <ligand>
        <name>NAD(+)</name>
        <dbReference type="ChEBI" id="CHEBI:57540"/>
    </ligand>
</feature>
<feature type="site" description="Activates thiol group during catalysis" evidence="1">
    <location>
        <position position="182"/>
    </location>
</feature>
<protein>
    <recommendedName>
        <fullName evidence="1">D-erythrose-4-phosphate dehydrogenase</fullName>
        <shortName evidence="1">E4PDH</shortName>
        <ecNumber evidence="1">1.2.1.72</ecNumber>
    </recommendedName>
</protein>
<accession>B5BFN5</accession>
<keyword id="KW-0963">Cytoplasm</keyword>
<keyword id="KW-0520">NAD</keyword>
<keyword id="KW-0560">Oxidoreductase</keyword>
<keyword id="KW-0664">Pyridoxine biosynthesis</keyword>
<organism>
    <name type="scientific">Salmonella paratyphi A (strain AKU_12601)</name>
    <dbReference type="NCBI Taxonomy" id="554290"/>
    <lineage>
        <taxon>Bacteria</taxon>
        <taxon>Pseudomonadati</taxon>
        <taxon>Pseudomonadota</taxon>
        <taxon>Gammaproteobacteria</taxon>
        <taxon>Enterobacterales</taxon>
        <taxon>Enterobacteriaceae</taxon>
        <taxon>Salmonella</taxon>
    </lineage>
</organism>
<name>E4PD_SALPK</name>
<sequence>MTVRIAINGFGRIGRNVVRALYESGRRAEITVVAINELADAAGMAHLLKYDTSHGRFAWEVRHEREQLFVGDDVIRILHERTLADLPWRELGVDVVLDCTGVYGNQEHGEAHIAAGAKKVLFSHPGSNDLDATVVFGVNQNQLRAEHRIVSNASCTTNCIIPVIKLLDDAYGIESGTVTAIHSAMNDQQVIDAYHSDLRRTRAASQSIIPVDTKLAAGITRIFPQFNDRFEAIAVRVPTINVTAIDLSVTVKKPVKASEVNQLLQKAAQGAFHGIVDYTESPLVSIDFNHDPHSAIVDGTQTRVSGAHLIKTLVWCDNEWGFANRMLDTTLAMAAVDFRLDASASTKL</sequence>
<evidence type="ECO:0000255" key="1">
    <source>
        <dbReference type="HAMAP-Rule" id="MF_01640"/>
    </source>
</evidence>
<gene>
    <name evidence="1" type="primary">epd</name>
    <name type="ordered locus">SSPA2740</name>
</gene>
<dbReference type="EC" id="1.2.1.72" evidence="1"/>
<dbReference type="EMBL" id="FM200053">
    <property type="protein sequence ID" value="CAR60981.1"/>
    <property type="molecule type" value="Genomic_DNA"/>
</dbReference>
<dbReference type="RefSeq" id="WP_000218331.1">
    <property type="nucleotide sequence ID" value="NC_011147.1"/>
</dbReference>
<dbReference type="SMR" id="B5BFN5"/>
<dbReference type="KEGG" id="sek:SSPA2740"/>
<dbReference type="HOGENOM" id="CLU_030140_0_0_6"/>
<dbReference type="UniPathway" id="UPA00244">
    <property type="reaction ID" value="UER00309"/>
</dbReference>
<dbReference type="Proteomes" id="UP000001869">
    <property type="component" value="Chromosome"/>
</dbReference>
<dbReference type="GO" id="GO:0005737">
    <property type="term" value="C:cytoplasm"/>
    <property type="evidence" value="ECO:0007669"/>
    <property type="project" value="UniProtKB-SubCell"/>
</dbReference>
<dbReference type="GO" id="GO:0048001">
    <property type="term" value="F:erythrose-4-phosphate dehydrogenase activity"/>
    <property type="evidence" value="ECO:0007669"/>
    <property type="project" value="UniProtKB-UniRule"/>
</dbReference>
<dbReference type="GO" id="GO:0051287">
    <property type="term" value="F:NAD binding"/>
    <property type="evidence" value="ECO:0007669"/>
    <property type="project" value="InterPro"/>
</dbReference>
<dbReference type="GO" id="GO:0050661">
    <property type="term" value="F:NADP binding"/>
    <property type="evidence" value="ECO:0007669"/>
    <property type="project" value="InterPro"/>
</dbReference>
<dbReference type="GO" id="GO:0006006">
    <property type="term" value="P:glucose metabolic process"/>
    <property type="evidence" value="ECO:0007669"/>
    <property type="project" value="InterPro"/>
</dbReference>
<dbReference type="GO" id="GO:0042823">
    <property type="term" value="P:pyridoxal phosphate biosynthetic process"/>
    <property type="evidence" value="ECO:0007669"/>
    <property type="project" value="UniProtKB-UniRule"/>
</dbReference>
<dbReference type="GO" id="GO:0008615">
    <property type="term" value="P:pyridoxine biosynthetic process"/>
    <property type="evidence" value="ECO:0007669"/>
    <property type="project" value="UniProtKB-UniRule"/>
</dbReference>
<dbReference type="CDD" id="cd23937">
    <property type="entry name" value="GAPDH_C_E4PDH"/>
    <property type="match status" value="1"/>
</dbReference>
<dbReference type="CDD" id="cd17892">
    <property type="entry name" value="GAPDH_N_E4PDH"/>
    <property type="match status" value="1"/>
</dbReference>
<dbReference type="FunFam" id="3.30.360.10:FF:000007">
    <property type="entry name" value="D-erythrose-4-phosphate dehydrogenase"/>
    <property type="match status" value="1"/>
</dbReference>
<dbReference type="FunFam" id="3.40.50.720:FF:000001">
    <property type="entry name" value="Glyceraldehyde-3-phosphate dehydrogenase"/>
    <property type="match status" value="1"/>
</dbReference>
<dbReference type="Gene3D" id="3.30.360.10">
    <property type="entry name" value="Dihydrodipicolinate Reductase, domain 2"/>
    <property type="match status" value="1"/>
</dbReference>
<dbReference type="Gene3D" id="3.40.50.720">
    <property type="entry name" value="NAD(P)-binding Rossmann-like Domain"/>
    <property type="match status" value="1"/>
</dbReference>
<dbReference type="HAMAP" id="MF_01640">
    <property type="entry name" value="E4P_dehydrog"/>
    <property type="match status" value="1"/>
</dbReference>
<dbReference type="InterPro" id="IPR006422">
    <property type="entry name" value="E4P_DH_bac"/>
</dbReference>
<dbReference type="InterPro" id="IPR020831">
    <property type="entry name" value="GlycerAld/Erythrose_P_DH"/>
</dbReference>
<dbReference type="InterPro" id="IPR020830">
    <property type="entry name" value="GlycerAld_3-P_DH_AS"/>
</dbReference>
<dbReference type="InterPro" id="IPR020829">
    <property type="entry name" value="GlycerAld_3-P_DH_cat"/>
</dbReference>
<dbReference type="InterPro" id="IPR020828">
    <property type="entry name" value="GlycerAld_3-P_DH_NAD(P)-bd"/>
</dbReference>
<dbReference type="InterPro" id="IPR006424">
    <property type="entry name" value="Glyceraldehyde-3-P_DH_1"/>
</dbReference>
<dbReference type="InterPro" id="IPR036291">
    <property type="entry name" value="NAD(P)-bd_dom_sf"/>
</dbReference>
<dbReference type="NCBIfam" id="TIGR01532">
    <property type="entry name" value="E4PD_g-proteo"/>
    <property type="match status" value="1"/>
</dbReference>
<dbReference type="NCBIfam" id="TIGR01534">
    <property type="entry name" value="GAPDH-I"/>
    <property type="match status" value="1"/>
</dbReference>
<dbReference type="NCBIfam" id="NF010058">
    <property type="entry name" value="PRK13535.1"/>
    <property type="match status" value="1"/>
</dbReference>
<dbReference type="PANTHER" id="PTHR43148">
    <property type="entry name" value="GLYCERALDEHYDE-3-PHOSPHATE DEHYDROGENASE 2"/>
    <property type="match status" value="1"/>
</dbReference>
<dbReference type="Pfam" id="PF02800">
    <property type="entry name" value="Gp_dh_C"/>
    <property type="match status" value="1"/>
</dbReference>
<dbReference type="Pfam" id="PF00044">
    <property type="entry name" value="Gp_dh_N"/>
    <property type="match status" value="1"/>
</dbReference>
<dbReference type="PIRSF" id="PIRSF000149">
    <property type="entry name" value="GAP_DH"/>
    <property type="match status" value="1"/>
</dbReference>
<dbReference type="PRINTS" id="PR00078">
    <property type="entry name" value="G3PDHDRGNASE"/>
</dbReference>
<dbReference type="SMART" id="SM00846">
    <property type="entry name" value="Gp_dh_N"/>
    <property type="match status" value="1"/>
</dbReference>
<dbReference type="SUPFAM" id="SSF55347">
    <property type="entry name" value="Glyceraldehyde-3-phosphate dehydrogenase-like, C-terminal domain"/>
    <property type="match status" value="1"/>
</dbReference>
<dbReference type="SUPFAM" id="SSF51735">
    <property type="entry name" value="NAD(P)-binding Rossmann-fold domains"/>
    <property type="match status" value="1"/>
</dbReference>
<dbReference type="PROSITE" id="PS00071">
    <property type="entry name" value="GAPDH"/>
    <property type="match status" value="1"/>
</dbReference>